<dbReference type="EC" id="2.4.2.18" evidence="1"/>
<dbReference type="EMBL" id="CP000325">
    <property type="protein sequence ID" value="ABL05695.1"/>
    <property type="molecule type" value="Genomic_DNA"/>
</dbReference>
<dbReference type="SMR" id="A0PTM6"/>
<dbReference type="KEGG" id="mul:MUL_3549"/>
<dbReference type="eggNOG" id="COG0547">
    <property type="taxonomic scope" value="Bacteria"/>
</dbReference>
<dbReference type="HOGENOM" id="CLU_034315_4_1_11"/>
<dbReference type="UniPathway" id="UPA00035">
    <property type="reaction ID" value="UER00041"/>
</dbReference>
<dbReference type="Proteomes" id="UP000000765">
    <property type="component" value="Chromosome"/>
</dbReference>
<dbReference type="GO" id="GO:0005829">
    <property type="term" value="C:cytosol"/>
    <property type="evidence" value="ECO:0007669"/>
    <property type="project" value="TreeGrafter"/>
</dbReference>
<dbReference type="GO" id="GO:0004048">
    <property type="term" value="F:anthranilate phosphoribosyltransferase activity"/>
    <property type="evidence" value="ECO:0007669"/>
    <property type="project" value="UniProtKB-UniRule"/>
</dbReference>
<dbReference type="GO" id="GO:0000287">
    <property type="term" value="F:magnesium ion binding"/>
    <property type="evidence" value="ECO:0007669"/>
    <property type="project" value="UniProtKB-UniRule"/>
</dbReference>
<dbReference type="GO" id="GO:0000162">
    <property type="term" value="P:L-tryptophan biosynthetic process"/>
    <property type="evidence" value="ECO:0007669"/>
    <property type="project" value="UniProtKB-UniRule"/>
</dbReference>
<dbReference type="FunFam" id="3.40.1030.10:FF:000002">
    <property type="entry name" value="Anthranilate phosphoribosyltransferase"/>
    <property type="match status" value="1"/>
</dbReference>
<dbReference type="Gene3D" id="3.40.1030.10">
    <property type="entry name" value="Nucleoside phosphorylase/phosphoribosyltransferase catalytic domain"/>
    <property type="match status" value="1"/>
</dbReference>
<dbReference type="Gene3D" id="1.20.970.10">
    <property type="entry name" value="Transferase, Pyrimidine Nucleoside Phosphorylase, Chain C"/>
    <property type="match status" value="1"/>
</dbReference>
<dbReference type="HAMAP" id="MF_00211">
    <property type="entry name" value="TrpD"/>
    <property type="match status" value="1"/>
</dbReference>
<dbReference type="InterPro" id="IPR005940">
    <property type="entry name" value="Anthranilate_Pribosyl_Tfrase"/>
</dbReference>
<dbReference type="InterPro" id="IPR000312">
    <property type="entry name" value="Glycosyl_Trfase_fam3"/>
</dbReference>
<dbReference type="InterPro" id="IPR017459">
    <property type="entry name" value="Glycosyl_Trfase_fam3_N_dom"/>
</dbReference>
<dbReference type="InterPro" id="IPR036320">
    <property type="entry name" value="Glycosyl_Trfase_fam3_N_dom_sf"/>
</dbReference>
<dbReference type="InterPro" id="IPR035902">
    <property type="entry name" value="Nuc_phospho_transferase"/>
</dbReference>
<dbReference type="NCBIfam" id="TIGR01245">
    <property type="entry name" value="trpD"/>
    <property type="match status" value="1"/>
</dbReference>
<dbReference type="PANTHER" id="PTHR43285">
    <property type="entry name" value="ANTHRANILATE PHOSPHORIBOSYLTRANSFERASE"/>
    <property type="match status" value="1"/>
</dbReference>
<dbReference type="PANTHER" id="PTHR43285:SF2">
    <property type="entry name" value="ANTHRANILATE PHOSPHORIBOSYLTRANSFERASE"/>
    <property type="match status" value="1"/>
</dbReference>
<dbReference type="Pfam" id="PF02885">
    <property type="entry name" value="Glycos_trans_3N"/>
    <property type="match status" value="1"/>
</dbReference>
<dbReference type="Pfam" id="PF00591">
    <property type="entry name" value="Glycos_transf_3"/>
    <property type="match status" value="1"/>
</dbReference>
<dbReference type="SUPFAM" id="SSF52418">
    <property type="entry name" value="Nucleoside phosphorylase/phosphoribosyltransferase catalytic domain"/>
    <property type="match status" value="1"/>
</dbReference>
<dbReference type="SUPFAM" id="SSF47648">
    <property type="entry name" value="Nucleoside phosphorylase/phosphoribosyltransferase N-terminal domain"/>
    <property type="match status" value="1"/>
</dbReference>
<name>TRPD_MYCUA</name>
<feature type="chain" id="PRO_1000043037" description="Anthranilate phosphoribosyltransferase">
    <location>
        <begin position="1"/>
        <end position="367"/>
    </location>
</feature>
<feature type="region of interest" description="Disordered" evidence="2">
    <location>
        <begin position="1"/>
        <end position="22"/>
    </location>
</feature>
<feature type="compositionally biased region" description="Low complexity" evidence="2">
    <location>
        <begin position="1"/>
        <end position="17"/>
    </location>
</feature>
<feature type="binding site" evidence="1">
    <location>
        <position position="104"/>
    </location>
    <ligand>
        <name>5-phospho-alpha-D-ribose 1-diphosphate</name>
        <dbReference type="ChEBI" id="CHEBI:58017"/>
    </ligand>
</feature>
<feature type="binding site" evidence="1">
    <location>
        <position position="104"/>
    </location>
    <ligand>
        <name>anthranilate</name>
        <dbReference type="ChEBI" id="CHEBI:16567"/>
        <label>1</label>
    </ligand>
</feature>
<feature type="binding site" evidence="1">
    <location>
        <begin position="107"/>
        <end position="108"/>
    </location>
    <ligand>
        <name>5-phospho-alpha-D-ribose 1-diphosphate</name>
        <dbReference type="ChEBI" id="CHEBI:58017"/>
    </ligand>
</feature>
<feature type="binding site" evidence="1">
    <location>
        <position position="112"/>
    </location>
    <ligand>
        <name>5-phospho-alpha-D-ribose 1-diphosphate</name>
        <dbReference type="ChEBI" id="CHEBI:58017"/>
    </ligand>
</feature>
<feature type="binding site" evidence="1">
    <location>
        <begin position="114"/>
        <end position="117"/>
    </location>
    <ligand>
        <name>5-phospho-alpha-D-ribose 1-diphosphate</name>
        <dbReference type="ChEBI" id="CHEBI:58017"/>
    </ligand>
</feature>
<feature type="binding site" evidence="1">
    <location>
        <position position="116"/>
    </location>
    <ligand>
        <name>Mg(2+)</name>
        <dbReference type="ChEBI" id="CHEBI:18420"/>
        <label>1</label>
    </ligand>
</feature>
<feature type="binding site" evidence="1">
    <location>
        <begin position="132"/>
        <end position="140"/>
    </location>
    <ligand>
        <name>5-phospho-alpha-D-ribose 1-diphosphate</name>
        <dbReference type="ChEBI" id="CHEBI:58017"/>
    </ligand>
</feature>
<feature type="binding site" evidence="1">
    <location>
        <position position="135"/>
    </location>
    <ligand>
        <name>anthranilate</name>
        <dbReference type="ChEBI" id="CHEBI:16567"/>
        <label>1</label>
    </ligand>
</feature>
<feature type="binding site" evidence="1">
    <location>
        <position position="144"/>
    </location>
    <ligand>
        <name>5-phospho-alpha-D-ribose 1-diphosphate</name>
        <dbReference type="ChEBI" id="CHEBI:58017"/>
    </ligand>
</feature>
<feature type="binding site" evidence="1">
    <location>
        <position position="190"/>
    </location>
    <ligand>
        <name>anthranilate</name>
        <dbReference type="ChEBI" id="CHEBI:16567"/>
        <label>2</label>
    </ligand>
</feature>
<feature type="binding site" evidence="1">
    <location>
        <position position="248"/>
    </location>
    <ligand>
        <name>Mg(2+)</name>
        <dbReference type="ChEBI" id="CHEBI:18420"/>
        <label>2</label>
    </ligand>
</feature>
<feature type="binding site" evidence="1">
    <location>
        <position position="249"/>
    </location>
    <ligand>
        <name>Mg(2+)</name>
        <dbReference type="ChEBI" id="CHEBI:18420"/>
        <label>1</label>
    </ligand>
</feature>
<feature type="binding site" evidence="1">
    <location>
        <position position="249"/>
    </location>
    <ligand>
        <name>Mg(2+)</name>
        <dbReference type="ChEBI" id="CHEBI:18420"/>
        <label>2</label>
    </ligand>
</feature>
<proteinExistence type="inferred from homology"/>
<keyword id="KW-0028">Amino-acid biosynthesis</keyword>
<keyword id="KW-0057">Aromatic amino acid biosynthesis</keyword>
<keyword id="KW-0328">Glycosyltransferase</keyword>
<keyword id="KW-0460">Magnesium</keyword>
<keyword id="KW-0479">Metal-binding</keyword>
<keyword id="KW-0808">Transferase</keyword>
<keyword id="KW-0822">Tryptophan biosynthesis</keyword>
<comment type="function">
    <text evidence="1">Catalyzes the transfer of the phosphoribosyl group of 5-phosphorylribose-1-pyrophosphate (PRPP) to anthranilate to yield N-(5'-phosphoribosyl)-anthranilate (PRA).</text>
</comment>
<comment type="catalytic activity">
    <reaction evidence="1">
        <text>N-(5-phospho-beta-D-ribosyl)anthranilate + diphosphate = 5-phospho-alpha-D-ribose 1-diphosphate + anthranilate</text>
        <dbReference type="Rhea" id="RHEA:11768"/>
        <dbReference type="ChEBI" id="CHEBI:16567"/>
        <dbReference type="ChEBI" id="CHEBI:18277"/>
        <dbReference type="ChEBI" id="CHEBI:33019"/>
        <dbReference type="ChEBI" id="CHEBI:58017"/>
        <dbReference type="EC" id="2.4.2.18"/>
    </reaction>
</comment>
<comment type="cofactor">
    <cofactor evidence="1">
        <name>Mg(2+)</name>
        <dbReference type="ChEBI" id="CHEBI:18420"/>
    </cofactor>
    <text evidence="1">Binds 2 magnesium ions per monomer.</text>
</comment>
<comment type="pathway">
    <text evidence="1">Amino-acid biosynthesis; L-tryptophan biosynthesis; L-tryptophan from chorismate: step 2/5.</text>
</comment>
<comment type="subunit">
    <text evidence="1">Homodimer.</text>
</comment>
<comment type="similarity">
    <text evidence="1">Belongs to the anthranilate phosphoribosyltransferase family.</text>
</comment>
<protein>
    <recommendedName>
        <fullName evidence="1">Anthranilate phosphoribosyltransferase</fullName>
        <ecNumber evidence="1">2.4.2.18</ecNumber>
    </recommendedName>
</protein>
<accession>A0PTM6</accession>
<evidence type="ECO:0000255" key="1">
    <source>
        <dbReference type="HAMAP-Rule" id="MF_00211"/>
    </source>
</evidence>
<evidence type="ECO:0000256" key="2">
    <source>
        <dbReference type="SAM" id="MobiDB-lite"/>
    </source>
</evidence>
<sequence>MVLSSEASSAADHSAAAPIPTSSWPQLLGRLTEGKHLEPGQAGWAMEQIMSGNARPAQVAAFAVAMKMKVPTAGEVGELADVMLAYARPMPADLIRDDTVDIVGTGGDGVNTVNLSTMASIVVAAAGVPVVKHGNRAASSLAGGADTLESLGVRIDLGPDQVARSLNENGIGFCFAPQFHPSYRQASVVRREIGVPTVFNLLGPLTNPARPRAGLIGCAFADLAEIMAGVFATRGSSVLVVHGDDGLDELTTTTTSTIWRVQAGTVDKLTFDPGDFGFARAELSQLLGGDPQANAAEARAVLGGAAGPVRDAVVLNAAGAIVAHAGLSSRAEWLPAWQDGLQRAAVAIDSGAAEQLLARWVRFSQHV</sequence>
<organism>
    <name type="scientific">Mycobacterium ulcerans (strain Agy99)</name>
    <dbReference type="NCBI Taxonomy" id="362242"/>
    <lineage>
        <taxon>Bacteria</taxon>
        <taxon>Bacillati</taxon>
        <taxon>Actinomycetota</taxon>
        <taxon>Actinomycetes</taxon>
        <taxon>Mycobacteriales</taxon>
        <taxon>Mycobacteriaceae</taxon>
        <taxon>Mycobacterium</taxon>
        <taxon>Mycobacterium ulcerans group</taxon>
    </lineage>
</organism>
<reference key="1">
    <citation type="journal article" date="2007" name="Genome Res.">
        <title>Reductive evolution and niche adaptation inferred from the genome of Mycobacterium ulcerans, the causative agent of Buruli ulcer.</title>
        <authorList>
            <person name="Stinear T.P."/>
            <person name="Seemann T."/>
            <person name="Pidot S."/>
            <person name="Frigui W."/>
            <person name="Reysset G."/>
            <person name="Garnier T."/>
            <person name="Meurice G."/>
            <person name="Simon D."/>
            <person name="Bouchier C."/>
            <person name="Ma L."/>
            <person name="Tichit M."/>
            <person name="Porter J.L."/>
            <person name="Ryan J."/>
            <person name="Johnson P.D.R."/>
            <person name="Davies J.K."/>
            <person name="Jenkin G.A."/>
            <person name="Small P.L.C."/>
            <person name="Jones L.M."/>
            <person name="Tekaia F."/>
            <person name="Laval F."/>
            <person name="Daffe M."/>
            <person name="Parkhill J."/>
            <person name="Cole S.T."/>
        </authorList>
    </citation>
    <scope>NUCLEOTIDE SEQUENCE [LARGE SCALE GENOMIC DNA]</scope>
    <source>
        <strain>Agy99</strain>
    </source>
</reference>
<gene>
    <name evidence="1" type="primary">trpD</name>
    <name type="ordered locus">MUL_3549</name>
</gene>